<accession>P10311</accession>
<organismHost>
    <name type="scientific">Enterobacteriaceae</name>
    <dbReference type="NCBI Taxonomy" id="543"/>
</organismHost>
<comment type="function">
    <text evidence="3">Performs inversion of a viral 3 kp segment (C-segment) that encodes two alternate pairs of tail fiber proteins thereby modifying the host specificity of the virus.</text>
</comment>
<comment type="similarity">
    <text evidence="4">Belongs to the site-specific recombinase resolvase family.</text>
</comment>
<protein>
    <recommendedName>
        <fullName>DNA-invertase</fullName>
    </recommendedName>
    <alternativeName>
        <fullName>Site-specific recombinase</fullName>
    </alternativeName>
</protein>
<keyword id="KW-0229">DNA integration</keyword>
<keyword id="KW-0230">DNA invertase</keyword>
<keyword id="KW-0233">DNA recombination</keyword>
<keyword id="KW-0238">DNA-binding</keyword>
<keyword id="KW-1185">Reference proteome</keyword>
<keyword id="KW-1264">Viral receptor tropism switching</keyword>
<keyword id="KW-1160">Virus entry into host cell</keyword>
<sequence>MLIGYVRVSTNEQNTALQRNALESAGCELIFEDKASGKKAERPGLKKVLRMLSRGDTLVVWKLDRLGRSMRHLVVLVEELRDRGINFRSLTDSIDTSTPMGRFFFHVMGALAEMERELIVERTRAGLDAARAEGRIGGRRPKYQEETWQQMRRLLEKGIPRKQVAIIYDVAVSTLYKKFPASSFQS</sequence>
<dbReference type="EMBL" id="X01828">
    <property type="protein sequence ID" value="CAA25965.1"/>
    <property type="molecule type" value="Genomic_DNA"/>
</dbReference>
<dbReference type="EMBL" id="AF234172">
    <property type="protein sequence ID" value="AAQ14003.1"/>
    <property type="molecule type" value="Genomic_DNA"/>
</dbReference>
<dbReference type="PIR" id="S07175">
    <property type="entry name" value="S07175"/>
</dbReference>
<dbReference type="RefSeq" id="YP_006499.1">
    <property type="nucleotide sequence ID" value="NC_005856.1"/>
</dbReference>
<dbReference type="SMR" id="P10311"/>
<dbReference type="GeneID" id="2777388"/>
<dbReference type="KEGG" id="vg:2777388"/>
<dbReference type="Proteomes" id="UP000008091">
    <property type="component" value="Genome"/>
</dbReference>
<dbReference type="GO" id="GO:0003677">
    <property type="term" value="F:DNA binding"/>
    <property type="evidence" value="ECO:0007669"/>
    <property type="project" value="UniProtKB-KW"/>
</dbReference>
<dbReference type="GO" id="GO:0000150">
    <property type="term" value="F:DNA strand exchange activity"/>
    <property type="evidence" value="ECO:0007669"/>
    <property type="project" value="UniProtKB-KW"/>
</dbReference>
<dbReference type="GO" id="GO:0015074">
    <property type="term" value="P:DNA integration"/>
    <property type="evidence" value="ECO:0007669"/>
    <property type="project" value="UniProtKB-KW"/>
</dbReference>
<dbReference type="GO" id="GO:0046718">
    <property type="term" value="P:symbiont entry into host cell"/>
    <property type="evidence" value="ECO:0007669"/>
    <property type="project" value="UniProtKB-KW"/>
</dbReference>
<dbReference type="GO" id="GO:0098678">
    <property type="term" value="P:viral tropism switching"/>
    <property type="evidence" value="ECO:0007669"/>
    <property type="project" value="UniProtKB-KW"/>
</dbReference>
<dbReference type="CDD" id="cd03768">
    <property type="entry name" value="SR_ResInv"/>
    <property type="match status" value="1"/>
</dbReference>
<dbReference type="FunFam" id="3.40.50.1390:FF:000001">
    <property type="entry name" value="DNA recombinase"/>
    <property type="match status" value="1"/>
</dbReference>
<dbReference type="Gene3D" id="1.10.10.60">
    <property type="entry name" value="Homeodomain-like"/>
    <property type="match status" value="1"/>
</dbReference>
<dbReference type="Gene3D" id="3.40.50.1390">
    <property type="entry name" value="Resolvase, N-terminal catalytic domain"/>
    <property type="match status" value="1"/>
</dbReference>
<dbReference type="InterPro" id="IPR009057">
    <property type="entry name" value="Homeodomain-like_sf"/>
</dbReference>
<dbReference type="InterPro" id="IPR006118">
    <property type="entry name" value="Recombinase_CS"/>
</dbReference>
<dbReference type="InterPro" id="IPR006119">
    <property type="entry name" value="Resolv_N"/>
</dbReference>
<dbReference type="InterPro" id="IPR036162">
    <property type="entry name" value="Resolvase-like_N_sf"/>
</dbReference>
<dbReference type="InterPro" id="IPR006120">
    <property type="entry name" value="Resolvase_HTH_dom"/>
</dbReference>
<dbReference type="InterPro" id="IPR050639">
    <property type="entry name" value="SSR_resolvase"/>
</dbReference>
<dbReference type="PANTHER" id="PTHR30461">
    <property type="entry name" value="DNA-INVERTASE FROM LAMBDOID PROPHAGE"/>
    <property type="match status" value="1"/>
</dbReference>
<dbReference type="PANTHER" id="PTHR30461:SF2">
    <property type="entry name" value="SERINE RECOMBINASE PINE-RELATED"/>
    <property type="match status" value="1"/>
</dbReference>
<dbReference type="Pfam" id="PF02796">
    <property type="entry name" value="HTH_7"/>
    <property type="match status" value="1"/>
</dbReference>
<dbReference type="Pfam" id="PF00239">
    <property type="entry name" value="Resolvase"/>
    <property type="match status" value="1"/>
</dbReference>
<dbReference type="SMART" id="SM00857">
    <property type="entry name" value="Resolvase"/>
    <property type="match status" value="1"/>
</dbReference>
<dbReference type="SUPFAM" id="SSF46689">
    <property type="entry name" value="Homeodomain-like"/>
    <property type="match status" value="1"/>
</dbReference>
<dbReference type="SUPFAM" id="SSF53041">
    <property type="entry name" value="Resolvase-like"/>
    <property type="match status" value="1"/>
</dbReference>
<dbReference type="PROSITE" id="PS00397">
    <property type="entry name" value="RECOMBINASES_1"/>
    <property type="match status" value="1"/>
</dbReference>
<dbReference type="PROSITE" id="PS00398">
    <property type="entry name" value="RECOMBINASES_2"/>
    <property type="match status" value="1"/>
</dbReference>
<dbReference type="PROSITE" id="PS51736">
    <property type="entry name" value="RECOMBINASES_3"/>
    <property type="match status" value="1"/>
</dbReference>
<reference key="1">
    <citation type="journal article" date="1983" name="EMBO J.">
        <title>Sequence of the site-specific recombinase gene cin and of its substrates serving in the inversion of the C segment of bacteriophage P1.</title>
        <authorList>
            <person name="Hiestand-Nauer R."/>
            <person name="Iida S."/>
        </authorList>
    </citation>
    <scope>NUCLEOTIDE SEQUENCE [GENOMIC DNA]</scope>
</reference>
<reference key="2">
    <citation type="submission" date="1987-07" db="EMBL/GenBank/DDBJ databases">
        <authorList>
            <person name="Iida S."/>
        </authorList>
    </citation>
    <scope>SEQUENCE REVISION</scope>
</reference>
<reference key="3">
    <citation type="journal article" date="2004" name="J. Bacteriol.">
        <title>Genome of bacteriophage P1.</title>
        <authorList>
            <person name="Lobocka M.B."/>
            <person name="Rose D.J."/>
            <person name="Plunkett G. III"/>
            <person name="Rusin M."/>
            <person name="Samojedny A."/>
            <person name="Lehnherr H."/>
            <person name="Yarmolinsky M.B."/>
            <person name="Blattner F.R."/>
        </authorList>
    </citation>
    <scope>NUCLEOTIDE SEQUENCE [LARGE SCALE GENOMIC DNA]</scope>
</reference>
<reference key="4">
    <citation type="journal article" date="1982" name="EMBO J.">
        <title>A site-specific, conservative recombination system carried by bacteriophage P1. Mapping the recombinase gene cin and the cross-over sites cix for the inversion of the C segment.</title>
        <authorList>
            <person name="Iida S."/>
            <person name="Meyer J."/>
            <person name="Kennedy K.E."/>
            <person name="Arber W."/>
        </authorList>
    </citation>
    <scope>FUNCTION</scope>
</reference>
<organism>
    <name type="scientific">Escherichia phage P1</name>
    <name type="common">Bacteriophage P1</name>
    <dbReference type="NCBI Taxonomy" id="2886926"/>
    <lineage>
        <taxon>Viruses</taxon>
        <taxon>Duplodnaviria</taxon>
        <taxon>Heunggongvirae</taxon>
        <taxon>Uroviricota</taxon>
        <taxon>Caudoviricetes</taxon>
        <taxon>Punavirus</taxon>
        <taxon>Punavirus P1</taxon>
    </lineage>
</organism>
<name>CIN_BPP1</name>
<evidence type="ECO:0000255" key="1"/>
<evidence type="ECO:0000255" key="2">
    <source>
        <dbReference type="PROSITE-ProRule" id="PRU01072"/>
    </source>
</evidence>
<evidence type="ECO:0000269" key="3">
    <source>
    </source>
</evidence>
<evidence type="ECO:0000305" key="4"/>
<feature type="chain" id="PRO_0000196356" description="DNA-invertase">
    <location>
        <begin position="1"/>
        <end position="186"/>
    </location>
</feature>
<feature type="domain" description="Resolvase/invertase-type recombinase catalytic" evidence="2">
    <location>
        <begin position="1"/>
        <end position="134"/>
    </location>
</feature>
<feature type="DNA-binding region" description="H-T-H motif" evidence="1">
    <location>
        <begin position="161"/>
        <end position="180"/>
    </location>
</feature>
<feature type="active site" description="O-(5'-phospho-DNA)-serine intermediate" evidence="2">
    <location>
        <position position="9"/>
    </location>
</feature>
<gene>
    <name type="primary">cin</name>
</gene>
<proteinExistence type="inferred from homology"/>